<organism>
    <name type="scientific">Shewanella sp. (strain ANA-3)</name>
    <dbReference type="NCBI Taxonomy" id="94122"/>
    <lineage>
        <taxon>Bacteria</taxon>
        <taxon>Pseudomonadati</taxon>
        <taxon>Pseudomonadota</taxon>
        <taxon>Gammaproteobacteria</taxon>
        <taxon>Alteromonadales</taxon>
        <taxon>Shewanellaceae</taxon>
        <taxon>Shewanella</taxon>
    </lineage>
</organism>
<accession>A0KXL6</accession>
<gene>
    <name evidence="1" type="primary">asnS</name>
    <name type="ordered locus">Shewana3_2306</name>
</gene>
<reference key="1">
    <citation type="submission" date="2006-09" db="EMBL/GenBank/DDBJ databases">
        <title>Complete sequence of chromosome 1 of Shewanella sp. ANA-3.</title>
        <authorList>
            <person name="Copeland A."/>
            <person name="Lucas S."/>
            <person name="Lapidus A."/>
            <person name="Barry K."/>
            <person name="Detter J.C."/>
            <person name="Glavina del Rio T."/>
            <person name="Hammon N."/>
            <person name="Israni S."/>
            <person name="Dalin E."/>
            <person name="Tice H."/>
            <person name="Pitluck S."/>
            <person name="Chertkov O."/>
            <person name="Brettin T."/>
            <person name="Bruce D."/>
            <person name="Han C."/>
            <person name="Tapia R."/>
            <person name="Gilna P."/>
            <person name="Schmutz J."/>
            <person name="Larimer F."/>
            <person name="Land M."/>
            <person name="Hauser L."/>
            <person name="Kyrpides N."/>
            <person name="Kim E."/>
            <person name="Newman D."/>
            <person name="Salticov C."/>
            <person name="Konstantinidis K."/>
            <person name="Klappenback J."/>
            <person name="Tiedje J."/>
            <person name="Richardson P."/>
        </authorList>
    </citation>
    <scope>NUCLEOTIDE SEQUENCE [LARGE SCALE GENOMIC DNA]</scope>
    <source>
        <strain>ANA-3</strain>
    </source>
</reference>
<comment type="catalytic activity">
    <reaction evidence="1">
        <text>tRNA(Asn) + L-asparagine + ATP = L-asparaginyl-tRNA(Asn) + AMP + diphosphate + H(+)</text>
        <dbReference type="Rhea" id="RHEA:11180"/>
        <dbReference type="Rhea" id="RHEA-COMP:9659"/>
        <dbReference type="Rhea" id="RHEA-COMP:9674"/>
        <dbReference type="ChEBI" id="CHEBI:15378"/>
        <dbReference type="ChEBI" id="CHEBI:30616"/>
        <dbReference type="ChEBI" id="CHEBI:33019"/>
        <dbReference type="ChEBI" id="CHEBI:58048"/>
        <dbReference type="ChEBI" id="CHEBI:78442"/>
        <dbReference type="ChEBI" id="CHEBI:78515"/>
        <dbReference type="ChEBI" id="CHEBI:456215"/>
        <dbReference type="EC" id="6.1.1.22"/>
    </reaction>
</comment>
<comment type="subunit">
    <text evidence="1">Homodimer.</text>
</comment>
<comment type="subcellular location">
    <subcellularLocation>
        <location evidence="1">Cytoplasm</location>
    </subcellularLocation>
</comment>
<comment type="similarity">
    <text evidence="1">Belongs to the class-II aminoacyl-tRNA synthetase family.</text>
</comment>
<keyword id="KW-0030">Aminoacyl-tRNA synthetase</keyword>
<keyword id="KW-0067">ATP-binding</keyword>
<keyword id="KW-0963">Cytoplasm</keyword>
<keyword id="KW-0436">Ligase</keyword>
<keyword id="KW-0547">Nucleotide-binding</keyword>
<keyword id="KW-0648">Protein biosynthesis</keyword>
<evidence type="ECO:0000255" key="1">
    <source>
        <dbReference type="HAMAP-Rule" id="MF_00534"/>
    </source>
</evidence>
<sequence length="466" mass="52261">MSIASVASVFKGEHAVGSTVTVRGWVRTRRDSKAGISFLAVYDGSCFNPIQGVVPNSLENYDNEVLKLTAGCSVIVTGEIVESPGAGQAYELQVTHVEVTGWVEDPDTYPMAAKRHSIEHLRELAHLRPRTNIIGAVARVRNCLSQAIHRFYHENGFVWVSTPLITASDCEGAGEMFRVSTLDMENLPRTSDGKVDYDKDFFGKEAFLTVSGQLNGETYACALSKIYTFGPTFRAENSNTSRHLAEFWMVEPEVAFATLSDIASLAEGMLKYAFNAVLAERMDDLQFFAQHVDKTVIERLQSFVSSDFAQVDYTDAVDILQKCGREFEFPVSWGIDLSSEHERYLAEEHFKAPVVVKNYPKDIKAFYMRLNEDGKTVAAMDVLAPGIGEIIGGSQREERLDVLDMRLEEMDLNKEDYWWYRDLRRYGTVPHSGFGLGFERLVSYVTGVSNIRDVIPFPRAPRTANF</sequence>
<name>SYN_SHESA</name>
<protein>
    <recommendedName>
        <fullName evidence="1">Asparagine--tRNA ligase</fullName>
        <ecNumber evidence="1">6.1.1.22</ecNumber>
    </recommendedName>
    <alternativeName>
        <fullName evidence="1">Asparaginyl-tRNA synthetase</fullName>
        <shortName evidence="1">AsnRS</shortName>
    </alternativeName>
</protein>
<feature type="chain" id="PRO_1000051426" description="Asparagine--tRNA ligase">
    <location>
        <begin position="1"/>
        <end position="466"/>
    </location>
</feature>
<dbReference type="EC" id="6.1.1.22" evidence="1"/>
<dbReference type="EMBL" id="CP000469">
    <property type="protein sequence ID" value="ABK48535.1"/>
    <property type="molecule type" value="Genomic_DNA"/>
</dbReference>
<dbReference type="RefSeq" id="WP_011717238.1">
    <property type="nucleotide sequence ID" value="NC_008577.1"/>
</dbReference>
<dbReference type="SMR" id="A0KXL6"/>
<dbReference type="STRING" id="94122.Shewana3_2306"/>
<dbReference type="KEGG" id="shn:Shewana3_2306"/>
<dbReference type="eggNOG" id="COG0017">
    <property type="taxonomic scope" value="Bacteria"/>
</dbReference>
<dbReference type="HOGENOM" id="CLU_004553_2_0_6"/>
<dbReference type="OrthoDB" id="9762036at2"/>
<dbReference type="Proteomes" id="UP000002589">
    <property type="component" value="Chromosome"/>
</dbReference>
<dbReference type="GO" id="GO:0005737">
    <property type="term" value="C:cytoplasm"/>
    <property type="evidence" value="ECO:0007669"/>
    <property type="project" value="UniProtKB-SubCell"/>
</dbReference>
<dbReference type="GO" id="GO:0004816">
    <property type="term" value="F:asparagine-tRNA ligase activity"/>
    <property type="evidence" value="ECO:0007669"/>
    <property type="project" value="UniProtKB-UniRule"/>
</dbReference>
<dbReference type="GO" id="GO:0005524">
    <property type="term" value="F:ATP binding"/>
    <property type="evidence" value="ECO:0007669"/>
    <property type="project" value="UniProtKB-UniRule"/>
</dbReference>
<dbReference type="GO" id="GO:0003676">
    <property type="term" value="F:nucleic acid binding"/>
    <property type="evidence" value="ECO:0007669"/>
    <property type="project" value="InterPro"/>
</dbReference>
<dbReference type="GO" id="GO:0006421">
    <property type="term" value="P:asparaginyl-tRNA aminoacylation"/>
    <property type="evidence" value="ECO:0007669"/>
    <property type="project" value="UniProtKB-UniRule"/>
</dbReference>
<dbReference type="CDD" id="cd00776">
    <property type="entry name" value="AsxRS_core"/>
    <property type="match status" value="1"/>
</dbReference>
<dbReference type="CDD" id="cd04318">
    <property type="entry name" value="EcAsnRS_like_N"/>
    <property type="match status" value="1"/>
</dbReference>
<dbReference type="FunFam" id="3.30.930.10:FF:000016">
    <property type="entry name" value="Asparagine--tRNA ligase"/>
    <property type="match status" value="1"/>
</dbReference>
<dbReference type="Gene3D" id="3.30.930.10">
    <property type="entry name" value="Bira Bifunctional Protein, Domain 2"/>
    <property type="match status" value="1"/>
</dbReference>
<dbReference type="Gene3D" id="2.40.50.140">
    <property type="entry name" value="Nucleic acid-binding proteins"/>
    <property type="match status" value="1"/>
</dbReference>
<dbReference type="HAMAP" id="MF_00534">
    <property type="entry name" value="Asn_tRNA_synth"/>
    <property type="match status" value="1"/>
</dbReference>
<dbReference type="InterPro" id="IPR004364">
    <property type="entry name" value="Aa-tRNA-synt_II"/>
</dbReference>
<dbReference type="InterPro" id="IPR006195">
    <property type="entry name" value="aa-tRNA-synth_II"/>
</dbReference>
<dbReference type="InterPro" id="IPR045864">
    <property type="entry name" value="aa-tRNA-synth_II/BPL/LPL"/>
</dbReference>
<dbReference type="InterPro" id="IPR004522">
    <property type="entry name" value="Asn-tRNA-ligase"/>
</dbReference>
<dbReference type="InterPro" id="IPR002312">
    <property type="entry name" value="Asp/Asn-tRNA-synth_IIb"/>
</dbReference>
<dbReference type="InterPro" id="IPR012340">
    <property type="entry name" value="NA-bd_OB-fold"/>
</dbReference>
<dbReference type="InterPro" id="IPR004365">
    <property type="entry name" value="NA-bd_OB_tRNA"/>
</dbReference>
<dbReference type="NCBIfam" id="TIGR00457">
    <property type="entry name" value="asnS"/>
    <property type="match status" value="1"/>
</dbReference>
<dbReference type="NCBIfam" id="NF003037">
    <property type="entry name" value="PRK03932.1"/>
    <property type="match status" value="1"/>
</dbReference>
<dbReference type="PANTHER" id="PTHR22594:SF34">
    <property type="entry name" value="ASPARAGINE--TRNA LIGASE, MITOCHONDRIAL-RELATED"/>
    <property type="match status" value="1"/>
</dbReference>
<dbReference type="PANTHER" id="PTHR22594">
    <property type="entry name" value="ASPARTYL/LYSYL-TRNA SYNTHETASE"/>
    <property type="match status" value="1"/>
</dbReference>
<dbReference type="Pfam" id="PF00152">
    <property type="entry name" value="tRNA-synt_2"/>
    <property type="match status" value="1"/>
</dbReference>
<dbReference type="Pfam" id="PF01336">
    <property type="entry name" value="tRNA_anti-codon"/>
    <property type="match status" value="1"/>
</dbReference>
<dbReference type="PRINTS" id="PR01042">
    <property type="entry name" value="TRNASYNTHASP"/>
</dbReference>
<dbReference type="SUPFAM" id="SSF55681">
    <property type="entry name" value="Class II aaRS and biotin synthetases"/>
    <property type="match status" value="1"/>
</dbReference>
<dbReference type="SUPFAM" id="SSF50249">
    <property type="entry name" value="Nucleic acid-binding proteins"/>
    <property type="match status" value="1"/>
</dbReference>
<dbReference type="PROSITE" id="PS50862">
    <property type="entry name" value="AA_TRNA_LIGASE_II"/>
    <property type="match status" value="1"/>
</dbReference>
<proteinExistence type="inferred from homology"/>